<name>CC181_RAT</name>
<sequence>MDEDKGIDSKESGEYEDDFEKDLEWLINDKEKSNGSMIEVACKKEDDLDQELKEKETETELGPQLSDPDKPPKDEALPRRNDFISVPSIQPLDPISDSDSENSFQDSKPENQKDLEDEEDEEVRRYIMEKIIEANKLLQTQEPVNDKRERKLKFKDKLVDLEVPPLEDSDTCKVLLENETNMSGKLSQLCISGDLGQESMLMSVTNGGCEENDRKILVERDGKFELMNLQDIESQGFLPPISSANGMEHESSQLPLRSANLSVGGIKKEEPEAKIHIMTLSQAGEPLAQVPQPPANPKNRPSSAANPDLNKKTRRSSHRIQSAGVSPVTSTYCLSPRQKELQKQLERKRERLKREEEQRKLEEENEKKKENEMVFKAWLQKKREQVVEMRRVQRAKQIEDMSSRQVNRDPQQAFRLWLKKKHEEQMKERKTEELRKQEECLFFLRGTEGRERAFRQWLRRKQIEKIAEQQAVKERARQLRLEARRSKQLQSGLYSVPEAKAFRFTDHYN</sequence>
<dbReference type="EMBL" id="BC078972">
    <property type="protein sequence ID" value="AAH78972.1"/>
    <property type="molecule type" value="mRNA"/>
</dbReference>
<dbReference type="RefSeq" id="NP_001014153.1">
    <property type="nucleotide sequence ID" value="NM_001014131.1"/>
</dbReference>
<dbReference type="SMR" id="Q6AYN9"/>
<dbReference type="FunCoup" id="Q6AYN9">
    <property type="interactions" value="301"/>
</dbReference>
<dbReference type="STRING" id="10116.ENSRNOP00000003844"/>
<dbReference type="PhosphoSitePlus" id="Q6AYN9"/>
<dbReference type="PaxDb" id="10116-ENSRNOP00000003844"/>
<dbReference type="Ensembl" id="ENSRNOT00000003844.6">
    <property type="protein sequence ID" value="ENSRNOP00000003844.4"/>
    <property type="gene ID" value="ENSRNOG00000002860.6"/>
</dbReference>
<dbReference type="GeneID" id="360867"/>
<dbReference type="KEGG" id="rno:360867"/>
<dbReference type="UCSC" id="RGD:1309708">
    <property type="organism name" value="rat"/>
</dbReference>
<dbReference type="AGR" id="RGD:1309708"/>
<dbReference type="CTD" id="57821"/>
<dbReference type="RGD" id="1309708">
    <property type="gene designation" value="Ccdc181"/>
</dbReference>
<dbReference type="eggNOG" id="ENOG502QV5R">
    <property type="taxonomic scope" value="Eukaryota"/>
</dbReference>
<dbReference type="GeneTree" id="ENSGT00390000018244"/>
<dbReference type="HOGENOM" id="CLU_040811_0_0_1"/>
<dbReference type="InParanoid" id="Q6AYN9"/>
<dbReference type="OMA" id="KAWLMRK"/>
<dbReference type="OrthoDB" id="6288248at2759"/>
<dbReference type="PhylomeDB" id="Q6AYN9"/>
<dbReference type="TreeFam" id="TF331115"/>
<dbReference type="PRO" id="PR:Q6AYN9"/>
<dbReference type="Proteomes" id="UP000002494">
    <property type="component" value="Chromosome 13"/>
</dbReference>
<dbReference type="Bgee" id="ENSRNOG00000002860">
    <property type="expression patterns" value="Expressed in testis and 19 other cell types or tissues"/>
</dbReference>
<dbReference type="GO" id="GO:0005737">
    <property type="term" value="C:cytoplasm"/>
    <property type="evidence" value="ECO:0007669"/>
    <property type="project" value="UniProtKB-KW"/>
</dbReference>
<dbReference type="GO" id="GO:0002177">
    <property type="term" value="C:manchette"/>
    <property type="evidence" value="ECO:0000250"/>
    <property type="project" value="UniProtKB"/>
</dbReference>
<dbReference type="GO" id="GO:0005874">
    <property type="term" value="C:microtubule"/>
    <property type="evidence" value="ECO:0007669"/>
    <property type="project" value="UniProtKB-KW"/>
</dbReference>
<dbReference type="GO" id="GO:0036126">
    <property type="term" value="C:sperm flagellum"/>
    <property type="evidence" value="ECO:0000250"/>
    <property type="project" value="UniProtKB"/>
</dbReference>
<dbReference type="GO" id="GO:0008017">
    <property type="term" value="F:microtubule binding"/>
    <property type="evidence" value="ECO:0000250"/>
    <property type="project" value="UniProtKB"/>
</dbReference>
<dbReference type="InterPro" id="IPR026687">
    <property type="entry name" value="CCDC181"/>
</dbReference>
<dbReference type="PANTHER" id="PTHR14320">
    <property type="entry name" value="COILED-COIL DOMAIN-CONTAINING PROTEIN 181"/>
    <property type="match status" value="1"/>
</dbReference>
<dbReference type="PANTHER" id="PTHR14320:SF2">
    <property type="entry name" value="COILED-COIL DOMAIN-CONTAINING PROTEIN 181"/>
    <property type="match status" value="1"/>
</dbReference>
<gene>
    <name evidence="5" type="primary">Ccdc181</name>
</gene>
<comment type="function">
    <text evidence="1">Microtubule-binding protein that localizes to the microtubular manchette of elongating spermatids.</text>
</comment>
<comment type="subunit">
    <text evidence="1">Homodimer. Interacts with HOOK1. Interacts with HOOK2. Interacts with HOOK3.</text>
</comment>
<comment type="subcellular location">
    <subcellularLocation>
        <location evidence="1">Cytoplasm</location>
        <location evidence="1">Cytoskeleton</location>
    </subcellularLocation>
    <subcellularLocation>
        <location evidence="1">Cell projection</location>
        <location evidence="1">Cilium</location>
        <location evidence="1">Flagellum</location>
    </subcellularLocation>
    <text evidence="1">Localizes to the microtubular manchette of elongating spermatids. Localizes to the sperm flagella and to the basal half of motile cilia.</text>
</comment>
<comment type="similarity">
    <text evidence="4">Belongs to the CCDC181 family.</text>
</comment>
<reference key="1">
    <citation type="journal article" date="2004" name="Genome Res.">
        <title>The status, quality, and expansion of the NIH full-length cDNA project: the Mammalian Gene Collection (MGC).</title>
        <authorList>
            <consortium name="The MGC Project Team"/>
        </authorList>
    </citation>
    <scope>NUCLEOTIDE SEQUENCE [LARGE SCALE MRNA]</scope>
    <source>
        <tissue>Testis</tissue>
    </source>
</reference>
<keyword id="KW-0966">Cell projection</keyword>
<keyword id="KW-0969">Cilium</keyword>
<keyword id="KW-0175">Coiled coil</keyword>
<keyword id="KW-0963">Cytoplasm</keyword>
<keyword id="KW-0206">Cytoskeleton</keyword>
<keyword id="KW-0282">Flagellum</keyword>
<keyword id="KW-0493">Microtubule</keyword>
<keyword id="KW-1185">Reference proteome</keyword>
<protein>
    <recommendedName>
        <fullName evidence="4">Coiled-coil domain-containing protein 181</fullName>
    </recommendedName>
</protein>
<proteinExistence type="evidence at transcript level"/>
<organism>
    <name type="scientific">Rattus norvegicus</name>
    <name type="common">Rat</name>
    <dbReference type="NCBI Taxonomy" id="10116"/>
    <lineage>
        <taxon>Eukaryota</taxon>
        <taxon>Metazoa</taxon>
        <taxon>Chordata</taxon>
        <taxon>Craniata</taxon>
        <taxon>Vertebrata</taxon>
        <taxon>Euteleostomi</taxon>
        <taxon>Mammalia</taxon>
        <taxon>Eutheria</taxon>
        <taxon>Euarchontoglires</taxon>
        <taxon>Glires</taxon>
        <taxon>Rodentia</taxon>
        <taxon>Myomorpha</taxon>
        <taxon>Muroidea</taxon>
        <taxon>Muridae</taxon>
        <taxon>Murinae</taxon>
        <taxon>Rattus</taxon>
    </lineage>
</organism>
<evidence type="ECO:0000250" key="1">
    <source>
        <dbReference type="UniProtKB" id="Q80ZU5"/>
    </source>
</evidence>
<evidence type="ECO:0000255" key="2"/>
<evidence type="ECO:0000256" key="3">
    <source>
        <dbReference type="SAM" id="MobiDB-lite"/>
    </source>
</evidence>
<evidence type="ECO:0000305" key="4"/>
<evidence type="ECO:0000312" key="5">
    <source>
        <dbReference type="RGD" id="1309708"/>
    </source>
</evidence>
<feature type="chain" id="PRO_0000279469" description="Coiled-coil domain-containing protein 181">
    <location>
        <begin position="1"/>
        <end position="509"/>
    </location>
</feature>
<feature type="region of interest" description="Disordered" evidence="3">
    <location>
        <begin position="27"/>
        <end position="122"/>
    </location>
</feature>
<feature type="region of interest" description="Disordered" evidence="3">
    <location>
        <begin position="287"/>
        <end position="368"/>
    </location>
</feature>
<feature type="coiled-coil region" evidence="2">
    <location>
        <begin position="335"/>
        <end position="377"/>
    </location>
</feature>
<feature type="coiled-coil region" evidence="2">
    <location>
        <begin position="418"/>
        <end position="488"/>
    </location>
</feature>
<feature type="compositionally biased region" description="Basic and acidic residues" evidence="3">
    <location>
        <begin position="41"/>
        <end position="58"/>
    </location>
</feature>
<feature type="compositionally biased region" description="Basic and acidic residues" evidence="3">
    <location>
        <begin position="67"/>
        <end position="82"/>
    </location>
</feature>
<feature type="compositionally biased region" description="Polar residues" evidence="3">
    <location>
        <begin position="319"/>
        <end position="333"/>
    </location>
</feature>
<feature type="compositionally biased region" description="Basic and acidic residues" evidence="3">
    <location>
        <begin position="337"/>
        <end position="368"/>
    </location>
</feature>
<accession>Q6AYN9</accession>